<dbReference type="EMBL" id="X17314">
    <property type="protein sequence ID" value="CAA35193.1"/>
    <property type="molecule type" value="mRNA"/>
</dbReference>
<dbReference type="PIR" id="S07061">
    <property type="entry name" value="S07061"/>
</dbReference>
<dbReference type="SMR" id="P20262"/>
<dbReference type="GO" id="GO:0045211">
    <property type="term" value="C:postsynaptic membrane"/>
    <property type="evidence" value="ECO:0007669"/>
    <property type="project" value="UniProtKB-SubCell"/>
</dbReference>
<dbReference type="GO" id="GO:0015276">
    <property type="term" value="F:ligand-gated monoatomic ion channel activity"/>
    <property type="evidence" value="ECO:0007669"/>
    <property type="project" value="InterPro"/>
</dbReference>
<dbReference type="GO" id="GO:0038023">
    <property type="term" value="F:signaling receptor activity"/>
    <property type="evidence" value="ECO:0007669"/>
    <property type="project" value="InterPro"/>
</dbReference>
<dbReference type="CDD" id="cd13685">
    <property type="entry name" value="PBP2_iGluR_non_NMDA_like"/>
    <property type="match status" value="1"/>
</dbReference>
<dbReference type="FunFam" id="3.40.190.10:FF:000060">
    <property type="entry name" value="Glutamate receptor ionotropic, kainate 1"/>
    <property type="match status" value="1"/>
</dbReference>
<dbReference type="FunFam" id="1.10.287.70:FF:000143">
    <property type="entry name" value="Probable glutamate receptor"/>
    <property type="match status" value="1"/>
</dbReference>
<dbReference type="FunFam" id="3.40.190.10:FF:000364">
    <property type="entry name" value="Si:dkey-183j2.10"/>
    <property type="match status" value="1"/>
</dbReference>
<dbReference type="Gene3D" id="3.40.190.10">
    <property type="entry name" value="Periplasmic binding protein-like II"/>
    <property type="match status" value="3"/>
</dbReference>
<dbReference type="InterPro" id="IPR019594">
    <property type="entry name" value="Glu/Gly-bd"/>
</dbReference>
<dbReference type="InterPro" id="IPR001508">
    <property type="entry name" value="Iono_Glu_rcpt_met"/>
</dbReference>
<dbReference type="InterPro" id="IPR015683">
    <property type="entry name" value="Ionotropic_Glu_rcpt"/>
</dbReference>
<dbReference type="InterPro" id="IPR001320">
    <property type="entry name" value="Iontro_rcpt_C"/>
</dbReference>
<dbReference type="PANTHER" id="PTHR18966">
    <property type="entry name" value="IONOTROPIC GLUTAMATE RECEPTOR"/>
    <property type="match status" value="1"/>
</dbReference>
<dbReference type="Pfam" id="PF00060">
    <property type="entry name" value="Lig_chan"/>
    <property type="match status" value="1"/>
</dbReference>
<dbReference type="Pfam" id="PF10613">
    <property type="entry name" value="Lig_chan-Glu_bd"/>
    <property type="match status" value="1"/>
</dbReference>
<dbReference type="PRINTS" id="PR00177">
    <property type="entry name" value="NMDARECEPTOR"/>
</dbReference>
<dbReference type="SMART" id="SM00918">
    <property type="entry name" value="Lig_chan-Glu_bd"/>
    <property type="match status" value="1"/>
</dbReference>
<dbReference type="SMART" id="SM00079">
    <property type="entry name" value="PBPe"/>
    <property type="match status" value="1"/>
</dbReference>
<dbReference type="SUPFAM" id="SSF53850">
    <property type="entry name" value="Periplasmic binding protein-like II"/>
    <property type="match status" value="1"/>
</dbReference>
<name>GLRK_LITBE</name>
<comment type="function">
    <text>Receptor for glutamate. L-glutamate acts as an excitatory neurotransmitter at many synapses in the central nervous system. The postsynaptic actions of Glu are mediated by a variety of receptors that are named according to their selective agonists.</text>
</comment>
<comment type="subcellular location">
    <subcellularLocation>
        <location>Cell membrane</location>
        <topology>Multi-pass membrane protein</topology>
    </subcellularLocation>
    <subcellularLocation>
        <location>Postsynaptic cell membrane</location>
        <topology>Multi-pass membrane protein</topology>
    </subcellularLocation>
</comment>
<comment type="similarity">
    <text evidence="4">Belongs to the glutamate-gated ion channel (TC 1.A.10.1) family.</text>
</comment>
<accession>P20262</accession>
<protein>
    <recommendedName>
        <fullName>Probable glutamate receptor</fullName>
    </recommendedName>
    <alternativeName>
        <fullName>Kainate-binding protein</fullName>
        <shortName>KBP</shortName>
    </alternativeName>
</protein>
<reference key="1">
    <citation type="journal article" date="1989" name="Nature">
        <title>Sequence and expression of a frog brain complementary DNA encoding a kainate-binding protein.</title>
        <authorList>
            <person name="Wada K."/>
            <person name="Dechesne C.J."/>
            <person name="Shimasaki S."/>
            <person name="King R.G."/>
            <person name="Kusano K."/>
            <person name="Buonanno A."/>
            <person name="Hampson D.R."/>
            <person name="Banner C."/>
            <person name="Wenthold R.J."/>
            <person name="Nakatani Y."/>
        </authorList>
    </citation>
    <scope>NUCLEOTIDE SEQUENCE [MRNA]</scope>
    <scope>PROTEIN SEQUENCE OF 150-175</scope>
    <source>
        <tissue>Brain</tissue>
    </source>
</reference>
<sequence length="487" mass="54278">MEKALMLFLAVSLLSLGHTDGKENAETLLKERTKRQIPKTLTVTTILEKPFAMKTESDALEGYAIDLLSELTQSLGFNYTLHIVKDGKYGSKDQEGNWSGMVGEIIRKEADLAIAPLTITSVRENAISFTKPFMQTGIGILLKKDTAAESSYMFGFLNPFSKELWIGIIISYVITSLCLFLVGRLSPCEWTEPASEQNQFTLLNSLWYGVGALTLQGAEPQPKALSARIIAVIWWVFSITLLAAYIGSFASYINSNTNQTPNIQSVEDLLKQDKLDFGTLSNSSTLNFFKNSKNPTFQMIYEYMDKRKDRVLVKTFSEGVQRVRESNYAFLGESISQDFVVAKHCDLIRAPEMIGGRGYGIAAELDSPLIRPLTIAILELFESGKLEYLRQKWWENTCSTQDQTGWVPVQPHTLGGIFLILGIGLALGLIVSFMELMCKSRSNAEQQKKSCCSAFSEEIAQRFGKTQNQEGLEKKSPTSNSCDEVKA</sequence>
<proteinExistence type="evidence at protein level"/>
<evidence type="ECO:0000255" key="1"/>
<evidence type="ECO:0000255" key="2">
    <source>
        <dbReference type="PROSITE-ProRule" id="PRU00498"/>
    </source>
</evidence>
<evidence type="ECO:0000256" key="3">
    <source>
        <dbReference type="SAM" id="MobiDB-lite"/>
    </source>
</evidence>
<evidence type="ECO:0000305" key="4"/>
<keyword id="KW-1003">Cell membrane</keyword>
<keyword id="KW-0903">Direct protein sequencing</keyword>
<keyword id="KW-0325">Glycoprotein</keyword>
<keyword id="KW-0407">Ion channel</keyword>
<keyword id="KW-0406">Ion transport</keyword>
<keyword id="KW-1071">Ligand-gated ion channel</keyword>
<keyword id="KW-0472">Membrane</keyword>
<keyword id="KW-0628">Postsynaptic cell membrane</keyword>
<keyword id="KW-0675">Receptor</keyword>
<keyword id="KW-0732">Signal</keyword>
<keyword id="KW-0770">Synapse</keyword>
<keyword id="KW-0812">Transmembrane</keyword>
<keyword id="KW-1133">Transmembrane helix</keyword>
<keyword id="KW-0813">Transport</keyword>
<feature type="signal peptide" evidence="1">
    <location>
        <begin position="1"/>
        <end position="17"/>
    </location>
</feature>
<feature type="chain" id="PRO_0000011558" description="Probable glutamate receptor">
    <location>
        <begin position="18"/>
        <end position="487"/>
    </location>
</feature>
<feature type="topological domain" description="Extracellular" evidence="1">
    <location>
        <begin position="18"/>
        <end position="162"/>
    </location>
</feature>
<feature type="transmembrane region" description="Helical" evidence="1">
    <location>
        <begin position="163"/>
        <end position="183"/>
    </location>
</feature>
<feature type="topological domain" description="Cytoplasmic" evidence="1">
    <location>
        <begin position="184"/>
        <end position="228"/>
    </location>
</feature>
<feature type="transmembrane region" description="Helical" evidence="1">
    <location>
        <begin position="229"/>
        <end position="249"/>
    </location>
</feature>
<feature type="topological domain" description="Extracellular" evidence="1">
    <location>
        <begin position="250"/>
        <end position="413"/>
    </location>
</feature>
<feature type="transmembrane region" description="Helical" evidence="1">
    <location>
        <begin position="414"/>
        <end position="434"/>
    </location>
</feature>
<feature type="topological domain" description="Cytoplasmic" evidence="1">
    <location>
        <begin position="435"/>
        <end position="487"/>
    </location>
</feature>
<feature type="region of interest" description="Disordered" evidence="3">
    <location>
        <begin position="464"/>
        <end position="487"/>
    </location>
</feature>
<feature type="compositionally biased region" description="Polar residues" evidence="3">
    <location>
        <begin position="477"/>
        <end position="487"/>
    </location>
</feature>
<feature type="glycosylation site" description="N-linked (GlcNAc...) asparagine" evidence="2">
    <location>
        <position position="78"/>
    </location>
</feature>
<feature type="glycosylation site" description="N-linked (GlcNAc...) asparagine" evidence="2">
    <location>
        <position position="97"/>
    </location>
</feature>
<feature type="glycosylation site" description="N-linked (GlcNAc...) asparagine" evidence="2">
    <location>
        <position position="282"/>
    </location>
</feature>
<organism>
    <name type="scientific">Lithobates berlandieri</name>
    <name type="common">Rio Grande leopard frog</name>
    <name type="synonym">Rana berlandieri</name>
    <dbReference type="NCBI Taxonomy" id="30360"/>
    <lineage>
        <taxon>Eukaryota</taxon>
        <taxon>Metazoa</taxon>
        <taxon>Chordata</taxon>
        <taxon>Craniata</taxon>
        <taxon>Vertebrata</taxon>
        <taxon>Euteleostomi</taxon>
        <taxon>Amphibia</taxon>
        <taxon>Batrachia</taxon>
        <taxon>Anura</taxon>
        <taxon>Neobatrachia</taxon>
        <taxon>Ranoidea</taxon>
        <taxon>Ranidae</taxon>
        <taxon>Lithobates</taxon>
    </lineage>
</organism>